<reference key="1">
    <citation type="journal article" date="2002" name="Genome Res.">
        <title>A complete sequence of the T. tengcongensis genome.</title>
        <authorList>
            <person name="Bao Q."/>
            <person name="Tian Y."/>
            <person name="Li W."/>
            <person name="Xu Z."/>
            <person name="Xuan Z."/>
            <person name="Hu S."/>
            <person name="Dong W."/>
            <person name="Yang J."/>
            <person name="Chen Y."/>
            <person name="Xue Y."/>
            <person name="Xu Y."/>
            <person name="Lai X."/>
            <person name="Huang L."/>
            <person name="Dong X."/>
            <person name="Ma Y."/>
            <person name="Ling L."/>
            <person name="Tan H."/>
            <person name="Chen R."/>
            <person name="Wang J."/>
            <person name="Yu J."/>
            <person name="Yang H."/>
        </authorList>
    </citation>
    <scope>NUCLEOTIDE SEQUENCE [LARGE SCALE GENOMIC DNA]</scope>
    <source>
        <strain>DSM 15242 / JCM 11007 / NBRC 100824 / MB4</strain>
    </source>
</reference>
<dbReference type="EMBL" id="AE008691">
    <property type="protein sequence ID" value="AAM23601.1"/>
    <property type="molecule type" value="Genomic_DNA"/>
</dbReference>
<dbReference type="RefSeq" id="WP_011024767.1">
    <property type="nucleotide sequence ID" value="NZ_JANUCV010000001.1"/>
</dbReference>
<dbReference type="SMR" id="Q8RCV0"/>
<dbReference type="STRING" id="273068.TTE0306"/>
<dbReference type="KEGG" id="tte:TTE0306"/>
<dbReference type="eggNOG" id="COG4821">
    <property type="taxonomic scope" value="Bacteria"/>
</dbReference>
<dbReference type="HOGENOM" id="CLU_089975_0_0_9"/>
<dbReference type="OrthoDB" id="9762536at2"/>
<dbReference type="Proteomes" id="UP000000555">
    <property type="component" value="Chromosome"/>
</dbReference>
<dbReference type="GO" id="GO:0097367">
    <property type="term" value="F:carbohydrate derivative binding"/>
    <property type="evidence" value="ECO:0007669"/>
    <property type="project" value="InterPro"/>
</dbReference>
<dbReference type="GO" id="GO:1901135">
    <property type="term" value="P:carbohydrate derivative metabolic process"/>
    <property type="evidence" value="ECO:0007669"/>
    <property type="project" value="InterPro"/>
</dbReference>
<dbReference type="CDD" id="cd05013">
    <property type="entry name" value="SIS_RpiR"/>
    <property type="match status" value="1"/>
</dbReference>
<dbReference type="Gene3D" id="3.40.50.10490">
    <property type="entry name" value="Glucose-6-phosphate isomerase like protein, domain 1"/>
    <property type="match status" value="1"/>
</dbReference>
<dbReference type="HAMAP" id="MF_01240">
    <property type="entry name" value="UPF0309"/>
    <property type="match status" value="1"/>
</dbReference>
<dbReference type="InterPro" id="IPR035472">
    <property type="entry name" value="RpiR-like_SIS"/>
</dbReference>
<dbReference type="InterPro" id="IPR001347">
    <property type="entry name" value="SIS_dom"/>
</dbReference>
<dbReference type="InterPro" id="IPR046348">
    <property type="entry name" value="SIS_dom_sf"/>
</dbReference>
<dbReference type="InterPro" id="IPR050099">
    <property type="entry name" value="SIS_GmhA/DiaA_subfam"/>
</dbReference>
<dbReference type="InterPro" id="IPR022951">
    <property type="entry name" value="UPF0309"/>
</dbReference>
<dbReference type="NCBIfam" id="NF002805">
    <property type="entry name" value="PRK02947.1"/>
    <property type="match status" value="1"/>
</dbReference>
<dbReference type="PANTHER" id="PTHR30390:SF7">
    <property type="entry name" value="PHOSPHOHEPTOSE ISOMERASE"/>
    <property type="match status" value="1"/>
</dbReference>
<dbReference type="PANTHER" id="PTHR30390">
    <property type="entry name" value="SEDOHEPTULOSE 7-PHOSPHATE ISOMERASE / DNAA INITIATOR-ASSOCIATING FACTOR FOR REPLICATION INITIATION"/>
    <property type="match status" value="1"/>
</dbReference>
<dbReference type="Pfam" id="PF13580">
    <property type="entry name" value="SIS_2"/>
    <property type="match status" value="1"/>
</dbReference>
<dbReference type="SUPFAM" id="SSF53697">
    <property type="entry name" value="SIS domain"/>
    <property type="match status" value="1"/>
</dbReference>
<dbReference type="PROSITE" id="PS51464">
    <property type="entry name" value="SIS"/>
    <property type="match status" value="1"/>
</dbReference>
<comment type="similarity">
    <text evidence="1">Belongs to the UPF0309 family.</text>
</comment>
<accession>Q8RCV0</accession>
<gene>
    <name type="ordered locus">TTE0306</name>
</gene>
<evidence type="ECO:0000255" key="1">
    <source>
        <dbReference type="HAMAP-Rule" id="MF_01240"/>
    </source>
</evidence>
<organism>
    <name type="scientific">Caldanaerobacter subterraneus subsp. tengcongensis (strain DSM 15242 / JCM 11007 / NBRC 100824 / MB4)</name>
    <name type="common">Thermoanaerobacter tengcongensis</name>
    <dbReference type="NCBI Taxonomy" id="273068"/>
    <lineage>
        <taxon>Bacteria</taxon>
        <taxon>Bacillati</taxon>
        <taxon>Bacillota</taxon>
        <taxon>Clostridia</taxon>
        <taxon>Thermoanaerobacterales</taxon>
        <taxon>Thermoanaerobacteraceae</taxon>
        <taxon>Caldanaerobacter</taxon>
    </lineage>
</organism>
<proteinExistence type="inferred from homology"/>
<keyword id="KW-1185">Reference proteome</keyword>
<sequence length="246" mass="27749">MLDLYIEEIYKRIEKIKSTQLEKIKQAAHLITESLISEDSVFHVFGCGHSHMAAEELFYRAGGLACVNAILPSELMLHEGALKSSYYERNEEIIKLIFDRYELRKGECIIIVSHSGRNGAPVEAAIDAKRRGLHVVALTSTEYKQKTFSRHSSGKFLEDVADIVIDNCGPYGDAVLTVEKEDIKISFSPLSTVLNTVILNMLEAEIITNMLEKNMSPPVFLSGNIEGAEEHNLKLIEKYKKRLRHL</sequence>
<feature type="chain" id="PRO_0000068187" description="UPF0309 protein TTE0306">
    <location>
        <begin position="1"/>
        <end position="246"/>
    </location>
</feature>
<feature type="domain" description="SIS" evidence="1">
    <location>
        <begin position="31"/>
        <end position="212"/>
    </location>
</feature>
<protein>
    <recommendedName>
        <fullName evidence="1">UPF0309 protein TTE0306</fullName>
    </recommendedName>
</protein>
<name>Y306_CALS4</name>